<evidence type="ECO:0000250" key="1">
    <source>
        <dbReference type="UniProtKB" id="P80044"/>
    </source>
</evidence>
<evidence type="ECO:0000255" key="2">
    <source>
        <dbReference type="PROSITE-ProRule" id="PRU00238"/>
    </source>
</evidence>
<evidence type="ECO:0000269" key="3">
    <source>
    </source>
</evidence>
<evidence type="ECO:0007744" key="4">
    <source>
        <dbReference type="PDB" id="1OUT"/>
    </source>
</evidence>
<evidence type="ECO:0007744" key="5">
    <source>
        <dbReference type="PDB" id="1OUU"/>
    </source>
</evidence>
<evidence type="ECO:0007829" key="6">
    <source>
        <dbReference type="PDB" id="1OUT"/>
    </source>
</evidence>
<accession>P02142</accession>
<comment type="function">
    <text>Involved in oxygen transport from gills to the various peripheral tissues.</text>
</comment>
<comment type="subunit">
    <text>Heterotetramer of two alpha chains and two beta chains.</text>
</comment>
<comment type="tissue specificity">
    <text>Red blood cells.</text>
</comment>
<comment type="miscellaneous">
    <text>This hemoglobin differs from other fish hemoglobins in lacking a residue between 121 and 122.</text>
</comment>
<comment type="similarity">
    <text evidence="2">Belongs to the globin family.</text>
</comment>
<organism>
    <name type="scientific">Oncorhynchus mykiss</name>
    <name type="common">Rainbow trout</name>
    <name type="synonym">Salmo gairdneri</name>
    <dbReference type="NCBI Taxonomy" id="8022"/>
    <lineage>
        <taxon>Eukaryota</taxon>
        <taxon>Metazoa</taxon>
        <taxon>Chordata</taxon>
        <taxon>Craniata</taxon>
        <taxon>Vertebrata</taxon>
        <taxon>Euteleostomi</taxon>
        <taxon>Actinopterygii</taxon>
        <taxon>Neopterygii</taxon>
        <taxon>Teleostei</taxon>
        <taxon>Protacanthopterygii</taxon>
        <taxon>Salmoniformes</taxon>
        <taxon>Salmonidae</taxon>
        <taxon>Salmoninae</taxon>
        <taxon>Oncorhynchus</taxon>
    </lineage>
</organism>
<sequence length="146" mass="15881">VEWTDAEKSTISAVWGKVNIDEIGPLALARVLIVYPWTQRYFGSFGNVSTPAAIMGNPKVAAHGKVVCGALDKAVKNMGNILATYKSLSETHANKLFVDPDNFRVLADVLTIVIAAKFGASFTPEIQATWQKFMKVVVAAMGSRYF</sequence>
<keyword id="KW-0002">3D-structure</keyword>
<keyword id="KW-0903">Direct protein sequencing</keyword>
<keyword id="KW-0349">Heme</keyword>
<keyword id="KW-0408">Iron</keyword>
<keyword id="KW-0479">Metal-binding</keyword>
<keyword id="KW-0561">Oxygen transport</keyword>
<keyword id="KW-0813">Transport</keyword>
<feature type="chain" id="PRO_0000053100" description="Hemoglobin subunit beta-1">
    <location>
        <begin position="1"/>
        <end position="146"/>
    </location>
</feature>
<feature type="domain" description="Globin" evidence="2">
    <location>
        <begin position="2"/>
        <end position="146"/>
    </location>
</feature>
<feature type="binding site" description="distal binding residue" evidence="1">
    <location>
        <position position="63"/>
    </location>
    <ligand>
        <name>heme b</name>
        <dbReference type="ChEBI" id="CHEBI:60344"/>
    </ligand>
    <ligandPart>
        <name>Fe</name>
        <dbReference type="ChEBI" id="CHEBI:18248"/>
    </ligandPart>
</feature>
<feature type="binding site" description="proximal binding residue" evidence="3 4 5">
    <location>
        <position position="92"/>
    </location>
    <ligand>
        <name>heme b</name>
        <dbReference type="ChEBI" id="CHEBI:60344"/>
    </ligand>
    <ligandPart>
        <name>Fe</name>
        <dbReference type="ChEBI" id="CHEBI:18248"/>
    </ligandPart>
</feature>
<feature type="helix" evidence="6">
    <location>
        <begin position="5"/>
        <end position="16"/>
    </location>
</feature>
<feature type="helix" evidence="6">
    <location>
        <begin position="20"/>
        <end position="34"/>
    </location>
</feature>
<feature type="helix" evidence="6">
    <location>
        <begin position="36"/>
        <end position="41"/>
    </location>
</feature>
<feature type="helix" evidence="6">
    <location>
        <begin position="43"/>
        <end position="45"/>
    </location>
</feature>
<feature type="helix" evidence="6">
    <location>
        <begin position="51"/>
        <end position="56"/>
    </location>
</feature>
<feature type="helix" evidence="6">
    <location>
        <begin position="58"/>
        <end position="69"/>
    </location>
</feature>
<feature type="helix" evidence="6">
    <location>
        <begin position="71"/>
        <end position="76"/>
    </location>
</feature>
<feature type="turn" evidence="6">
    <location>
        <begin position="77"/>
        <end position="79"/>
    </location>
</feature>
<feature type="helix" evidence="6">
    <location>
        <begin position="81"/>
        <end position="84"/>
    </location>
</feature>
<feature type="helix" evidence="6">
    <location>
        <begin position="86"/>
        <end position="94"/>
    </location>
</feature>
<feature type="helix" evidence="6">
    <location>
        <begin position="101"/>
        <end position="118"/>
    </location>
</feature>
<feature type="helix" evidence="6">
    <location>
        <begin position="119"/>
        <end position="121"/>
    </location>
</feature>
<feature type="helix" evidence="6">
    <location>
        <begin position="124"/>
        <end position="141"/>
    </location>
</feature>
<feature type="turn" evidence="6">
    <location>
        <begin position="142"/>
        <end position="144"/>
    </location>
</feature>
<name>HBB1_ONCMY</name>
<proteinExistence type="evidence at protein level"/>
<gene>
    <name type="primary">hbb1</name>
</gene>
<dbReference type="PIR" id="A02462">
    <property type="entry name" value="HBTR1"/>
</dbReference>
<dbReference type="PDB" id="1OUT">
    <property type="method" value="X-ray"/>
    <property type="resolution" value="2.30 A"/>
    <property type="chains" value="B=1-146"/>
</dbReference>
<dbReference type="PDB" id="1OUU">
    <property type="method" value="X-ray"/>
    <property type="resolution" value="2.50 A"/>
    <property type="chains" value="B/D=1-146"/>
</dbReference>
<dbReference type="PDBsum" id="1OUT"/>
<dbReference type="PDBsum" id="1OUU"/>
<dbReference type="SMR" id="P02142"/>
<dbReference type="MINT" id="P02142"/>
<dbReference type="EvolutionaryTrace" id="P02142"/>
<dbReference type="Proteomes" id="UP000694395">
    <property type="component" value="Unplaced"/>
</dbReference>
<dbReference type="GO" id="GO:0072562">
    <property type="term" value="C:blood microparticle"/>
    <property type="evidence" value="ECO:0007669"/>
    <property type="project" value="TreeGrafter"/>
</dbReference>
<dbReference type="GO" id="GO:0031838">
    <property type="term" value="C:haptoglobin-hemoglobin complex"/>
    <property type="evidence" value="ECO:0007669"/>
    <property type="project" value="TreeGrafter"/>
</dbReference>
<dbReference type="GO" id="GO:0005833">
    <property type="term" value="C:hemoglobin complex"/>
    <property type="evidence" value="ECO:0007669"/>
    <property type="project" value="InterPro"/>
</dbReference>
<dbReference type="GO" id="GO:0031720">
    <property type="term" value="F:haptoglobin binding"/>
    <property type="evidence" value="ECO:0007669"/>
    <property type="project" value="TreeGrafter"/>
</dbReference>
<dbReference type="GO" id="GO:0020037">
    <property type="term" value="F:heme binding"/>
    <property type="evidence" value="ECO:0007669"/>
    <property type="project" value="InterPro"/>
</dbReference>
<dbReference type="GO" id="GO:0046872">
    <property type="term" value="F:metal ion binding"/>
    <property type="evidence" value="ECO:0007669"/>
    <property type="project" value="UniProtKB-KW"/>
</dbReference>
<dbReference type="GO" id="GO:0043177">
    <property type="term" value="F:organic acid binding"/>
    <property type="evidence" value="ECO:0007669"/>
    <property type="project" value="TreeGrafter"/>
</dbReference>
<dbReference type="GO" id="GO:0019825">
    <property type="term" value="F:oxygen binding"/>
    <property type="evidence" value="ECO:0007669"/>
    <property type="project" value="InterPro"/>
</dbReference>
<dbReference type="GO" id="GO:0005344">
    <property type="term" value="F:oxygen carrier activity"/>
    <property type="evidence" value="ECO:0007669"/>
    <property type="project" value="UniProtKB-KW"/>
</dbReference>
<dbReference type="GO" id="GO:0004601">
    <property type="term" value="F:peroxidase activity"/>
    <property type="evidence" value="ECO:0007669"/>
    <property type="project" value="TreeGrafter"/>
</dbReference>
<dbReference type="GO" id="GO:0042744">
    <property type="term" value="P:hydrogen peroxide catabolic process"/>
    <property type="evidence" value="ECO:0007669"/>
    <property type="project" value="TreeGrafter"/>
</dbReference>
<dbReference type="CDD" id="cd08925">
    <property type="entry name" value="Hb-beta-like"/>
    <property type="match status" value="1"/>
</dbReference>
<dbReference type="FunFam" id="1.10.490.10:FF:000001">
    <property type="entry name" value="Hemoglobin subunit beta"/>
    <property type="match status" value="1"/>
</dbReference>
<dbReference type="Gene3D" id="1.10.490.10">
    <property type="entry name" value="Globins"/>
    <property type="match status" value="1"/>
</dbReference>
<dbReference type="InterPro" id="IPR000971">
    <property type="entry name" value="Globin"/>
</dbReference>
<dbReference type="InterPro" id="IPR009050">
    <property type="entry name" value="Globin-like_sf"/>
</dbReference>
<dbReference type="InterPro" id="IPR012292">
    <property type="entry name" value="Globin/Proto"/>
</dbReference>
<dbReference type="InterPro" id="IPR002337">
    <property type="entry name" value="Hemoglobin_b"/>
</dbReference>
<dbReference type="InterPro" id="IPR050056">
    <property type="entry name" value="Hemoglobin_oxygen_transport"/>
</dbReference>
<dbReference type="PANTHER" id="PTHR11442">
    <property type="entry name" value="HEMOGLOBIN FAMILY MEMBER"/>
    <property type="match status" value="1"/>
</dbReference>
<dbReference type="PANTHER" id="PTHR11442:SF7">
    <property type="entry name" value="HEMOGLOBIN SUBUNIT EPSILON"/>
    <property type="match status" value="1"/>
</dbReference>
<dbReference type="Pfam" id="PF00042">
    <property type="entry name" value="Globin"/>
    <property type="match status" value="1"/>
</dbReference>
<dbReference type="PRINTS" id="PR00814">
    <property type="entry name" value="BETAHAEM"/>
</dbReference>
<dbReference type="SUPFAM" id="SSF46458">
    <property type="entry name" value="Globin-like"/>
    <property type="match status" value="1"/>
</dbReference>
<dbReference type="PROSITE" id="PS01033">
    <property type="entry name" value="GLOBIN"/>
    <property type="match status" value="1"/>
</dbReference>
<reference key="1">
    <citation type="journal article" date="1983" name="Biochim. Biophys. Acta">
        <title>Primary structure of hemoglobin from trout (Salmo irideus) amino acid sequence of the beta chain of trout Hb I.</title>
        <authorList>
            <person name="Barra D."/>
            <person name="Petruzzelli R."/>
            <person name="Bossa F."/>
            <person name="Brunori M."/>
        </authorList>
    </citation>
    <scope>PROTEIN SEQUENCE</scope>
</reference>
<reference key="2">
    <citation type="journal article" date="1996" name="J. Mol. Biol.">
        <title>The crystal structures of trout Hb I in the deoxy and carbonmonoxy forms.</title>
        <authorList>
            <person name="Tame J.R.H."/>
            <person name="Wilson J.C."/>
            <person name="Weber R.E."/>
        </authorList>
    </citation>
    <scope>X-RAY CRYSTALLOGRAPHY (2.30 ANGSTROMS) IN COMPLEX WITH HEME</scope>
</reference>
<protein>
    <recommendedName>
        <fullName>Hemoglobin subunit beta-1</fullName>
    </recommendedName>
    <alternativeName>
        <fullName>Beta-1-globin</fullName>
    </alternativeName>
    <alternativeName>
        <fullName>Hemoglobin beta-1 chain</fullName>
    </alternativeName>
    <alternativeName>
        <fullName>Hemoglobin beta-I chain</fullName>
    </alternativeName>
</protein>